<comment type="function">
    <text evidence="1">Mediates the hydrolysis of oxidized nucleoside diphosphate derivatives. Hydrolyzes 8-oxo-7,8-dihydroguanine (8-oxo-Gua)-containing deoxyribo- and ribonucleoside diphosphates to the monophosphates. Hydrolyzes 8-oxo-dGDP and 8-oxo-GDP with the same efficiencies. Also hydrolyzes 8-OH-dADP and 2-OH-dADP. Exhibited no or minimal hydrolysis activity against 8-oxo-dGTP, 8-oxo-GTP, dGTP, GTP, dGDP and GDP. Probably removes oxidized guanine nucleotides from both the DNA and RNA precursor pools.</text>
</comment>
<comment type="catalytic activity">
    <reaction evidence="1">
        <text>8-oxo-dGDP + H2O = 8-oxo-dGMP + phosphate + H(+)</text>
        <dbReference type="Rhea" id="RHEA:32063"/>
        <dbReference type="ChEBI" id="CHEBI:15377"/>
        <dbReference type="ChEBI" id="CHEBI:15378"/>
        <dbReference type="ChEBI" id="CHEBI:43474"/>
        <dbReference type="ChEBI" id="CHEBI:63224"/>
        <dbReference type="ChEBI" id="CHEBI:63715"/>
        <dbReference type="EC" id="3.6.1.58"/>
    </reaction>
    <physiologicalReaction direction="left-to-right" evidence="1">
        <dbReference type="Rhea" id="RHEA:32064"/>
    </physiologicalReaction>
</comment>
<comment type="catalytic activity">
    <reaction evidence="1">
        <text>8-oxo-dADP + H2O = 8-oxo-dAMP + phosphate + H(+)</text>
        <dbReference type="Rhea" id="RHEA:35219"/>
        <dbReference type="ChEBI" id="CHEBI:15377"/>
        <dbReference type="ChEBI" id="CHEBI:15378"/>
        <dbReference type="ChEBI" id="CHEBI:43474"/>
        <dbReference type="ChEBI" id="CHEBI:71361"/>
        <dbReference type="ChEBI" id="CHEBI:71362"/>
    </reaction>
    <physiologicalReaction direction="left-to-right" evidence="1">
        <dbReference type="Rhea" id="RHEA:35220"/>
    </physiologicalReaction>
</comment>
<comment type="catalytic activity">
    <reaction evidence="1">
        <text>2-oxo-dADP + H2O = 2-oxo-dAMP + phosphate + H(+)</text>
        <dbReference type="Rhea" id="RHEA:35223"/>
        <dbReference type="ChEBI" id="CHEBI:15377"/>
        <dbReference type="ChEBI" id="CHEBI:15378"/>
        <dbReference type="ChEBI" id="CHEBI:43474"/>
        <dbReference type="ChEBI" id="CHEBI:63212"/>
        <dbReference type="ChEBI" id="CHEBI:71363"/>
    </reaction>
    <physiologicalReaction direction="left-to-right" evidence="1">
        <dbReference type="Rhea" id="RHEA:35224"/>
    </physiologicalReaction>
</comment>
<comment type="catalytic activity">
    <reaction evidence="1">
        <text>8-oxo-GDP + H2O = 8-oxo-GMP + phosphate + H(+)</text>
        <dbReference type="Rhea" id="RHEA:62356"/>
        <dbReference type="ChEBI" id="CHEBI:15377"/>
        <dbReference type="ChEBI" id="CHEBI:15378"/>
        <dbReference type="ChEBI" id="CHEBI:43474"/>
        <dbReference type="ChEBI" id="CHEBI:143554"/>
        <dbReference type="ChEBI" id="CHEBI:145694"/>
        <dbReference type="EC" id="3.6.1.58"/>
    </reaction>
    <physiologicalReaction direction="left-to-right" evidence="1">
        <dbReference type="Rhea" id="RHEA:62357"/>
    </physiologicalReaction>
</comment>
<comment type="cofactor">
    <cofactor evidence="1">
        <name>Mn(2+)</name>
        <dbReference type="ChEBI" id="CHEBI:29035"/>
    </cofactor>
    <cofactor evidence="1">
        <name>Mg(2+)</name>
        <dbReference type="ChEBI" id="CHEBI:18420"/>
    </cofactor>
</comment>
<comment type="similarity">
    <text evidence="3">Belongs to the Nudix hydrolase family.</text>
</comment>
<protein>
    <recommendedName>
        <fullName evidence="1">8-oxo-dGDP phosphatase NUDT18</fullName>
        <ecNumber evidence="1">3.6.1.58</ecNumber>
    </recommendedName>
    <alternativeName>
        <fullName>2-hydroxy-dADP phosphatase</fullName>
    </alternativeName>
    <alternativeName>
        <fullName>7,8-dihydro-8-oxoguanine phosphatase</fullName>
    </alternativeName>
    <alternativeName>
        <fullName>Nucleoside diphosphate-linked moiety X motif 18</fullName>
        <shortName>Nudix motif 18</shortName>
    </alternativeName>
</protein>
<name>NUD18_DANRE</name>
<gene>
    <name type="primary">nudt18</name>
    <name evidence="4" type="ORF">zgc:110174</name>
</gene>
<keyword id="KW-0378">Hydrolase</keyword>
<keyword id="KW-0460">Magnesium</keyword>
<keyword id="KW-0464">Manganese</keyword>
<keyword id="KW-0479">Metal-binding</keyword>
<keyword id="KW-0546">Nucleotide metabolism</keyword>
<keyword id="KW-1185">Reference proteome</keyword>
<accession>Q568Q0</accession>
<proteinExistence type="evidence at transcript level"/>
<dbReference type="EC" id="3.6.1.58" evidence="1"/>
<dbReference type="EMBL" id="BC092771">
    <property type="protein sequence ID" value="AAH92771.1"/>
    <property type="molecule type" value="mRNA"/>
</dbReference>
<dbReference type="RefSeq" id="NP_001017843.1">
    <property type="nucleotide sequence ID" value="NM_001017843.1"/>
</dbReference>
<dbReference type="SMR" id="Q568Q0"/>
<dbReference type="FunCoup" id="Q568Q0">
    <property type="interactions" value="605"/>
</dbReference>
<dbReference type="STRING" id="7955.ENSDARP00000060954"/>
<dbReference type="PaxDb" id="7955-ENSDARP00000060954"/>
<dbReference type="DNASU" id="550541"/>
<dbReference type="GeneID" id="550541"/>
<dbReference type="KEGG" id="dre:550541"/>
<dbReference type="AGR" id="ZFIN:ZDB-GENE-050417-388"/>
<dbReference type="CTD" id="79873"/>
<dbReference type="ZFIN" id="ZDB-GENE-050417-388">
    <property type="gene designation" value="nudt18"/>
</dbReference>
<dbReference type="eggNOG" id="KOG0648">
    <property type="taxonomic scope" value="Eukaryota"/>
</dbReference>
<dbReference type="InParanoid" id="Q568Q0"/>
<dbReference type="OrthoDB" id="10005910at2759"/>
<dbReference type="PhylomeDB" id="Q568Q0"/>
<dbReference type="Reactome" id="R-DRE-2393930">
    <property type="pathway name" value="Phosphate bond hydrolysis by NUDT proteins"/>
</dbReference>
<dbReference type="PRO" id="PR:Q568Q0"/>
<dbReference type="Proteomes" id="UP000000437">
    <property type="component" value="Chromosome 8"/>
</dbReference>
<dbReference type="GO" id="GO:0044717">
    <property type="term" value="F:8-hydroxy-dADP phosphatase activity"/>
    <property type="evidence" value="ECO:0000250"/>
    <property type="project" value="UniProtKB"/>
</dbReference>
<dbReference type="GO" id="GO:0044715">
    <property type="term" value="F:8-oxo-dGDP phosphatase activity"/>
    <property type="evidence" value="ECO:0000250"/>
    <property type="project" value="UniProtKB"/>
</dbReference>
<dbReference type="GO" id="GO:0044716">
    <property type="term" value="F:8-oxo-GDP phosphatase activity"/>
    <property type="evidence" value="ECO:0000250"/>
    <property type="project" value="UniProtKB"/>
</dbReference>
<dbReference type="GO" id="GO:0046872">
    <property type="term" value="F:metal ion binding"/>
    <property type="evidence" value="ECO:0007669"/>
    <property type="project" value="UniProtKB-KW"/>
</dbReference>
<dbReference type="GO" id="GO:0046057">
    <property type="term" value="P:dADP catabolic process"/>
    <property type="evidence" value="ECO:0000250"/>
    <property type="project" value="UniProtKB"/>
</dbReference>
<dbReference type="GO" id="GO:0046067">
    <property type="term" value="P:dGDP catabolic process"/>
    <property type="evidence" value="ECO:0000250"/>
    <property type="project" value="UniProtKB"/>
</dbReference>
<dbReference type="GO" id="GO:0046712">
    <property type="term" value="P:GDP catabolic process"/>
    <property type="evidence" value="ECO:0000250"/>
    <property type="project" value="UniProtKB"/>
</dbReference>
<dbReference type="CDD" id="cd04671">
    <property type="entry name" value="NUDIX_8DGDPP_Nudt18"/>
    <property type="match status" value="1"/>
</dbReference>
<dbReference type="FunFam" id="3.90.79.10:FF:000080">
    <property type="entry name" value="8-oxo-dGDP phosphatase NUDT18"/>
    <property type="match status" value="1"/>
</dbReference>
<dbReference type="Gene3D" id="3.90.79.10">
    <property type="entry name" value="Nucleoside Triphosphate Pyrophosphohydrolase"/>
    <property type="match status" value="1"/>
</dbReference>
<dbReference type="InterPro" id="IPR015797">
    <property type="entry name" value="NUDIX_hydrolase-like_dom_sf"/>
</dbReference>
<dbReference type="InterPro" id="IPR020084">
    <property type="entry name" value="NUDIX_hydrolase_CS"/>
</dbReference>
<dbReference type="InterPro" id="IPR000086">
    <property type="entry name" value="NUDIX_hydrolase_dom"/>
</dbReference>
<dbReference type="InterPro" id="IPR042970">
    <property type="entry name" value="NUDT18_NUDIX"/>
</dbReference>
<dbReference type="PANTHER" id="PTHR22769:SF56">
    <property type="entry name" value="8-OXO-DGDP PHOSPHATASE NUDT18"/>
    <property type="match status" value="1"/>
</dbReference>
<dbReference type="PANTHER" id="PTHR22769">
    <property type="entry name" value="MUTT/NUDIX HYDROLASE"/>
    <property type="match status" value="1"/>
</dbReference>
<dbReference type="Pfam" id="PF00293">
    <property type="entry name" value="NUDIX"/>
    <property type="match status" value="1"/>
</dbReference>
<dbReference type="SUPFAM" id="SSF55811">
    <property type="entry name" value="Nudix"/>
    <property type="match status" value="1"/>
</dbReference>
<dbReference type="PROSITE" id="PS51462">
    <property type="entry name" value="NUDIX"/>
    <property type="match status" value="1"/>
</dbReference>
<dbReference type="PROSITE" id="PS00893">
    <property type="entry name" value="NUDIX_BOX"/>
    <property type="match status" value="1"/>
</dbReference>
<sequence>MDSQSSILEENLEKILRGEGLEFDSVAEQVDPVTLRKNVCYIVGAVIFNSKEEVLMVQEAKRECYGRWYLPAGRMEECESILEALQREVREEAGIDCQPITLLLVQEQGPRWVRFIFLAEETGGSLKTTAEADDESLQAHWWDRKSPLPLRAHDILSLIDAGLKYRRNPWFPVTQPVDFPCHVVCQRLFLTFISSRADADDRLWLLMSNNNTSHHPRLPIVVSFRTYISKAVSKLIEDCMPSSYISVHIRGILGVQHNGRIPGKTDGICFNTLVLLENTEEGAEIGSPPSLETDCYRWQEVTNQGLKAKIIERIKDGSVLPFQSL</sequence>
<organism>
    <name type="scientific">Danio rerio</name>
    <name type="common">Zebrafish</name>
    <name type="synonym">Brachydanio rerio</name>
    <dbReference type="NCBI Taxonomy" id="7955"/>
    <lineage>
        <taxon>Eukaryota</taxon>
        <taxon>Metazoa</taxon>
        <taxon>Chordata</taxon>
        <taxon>Craniata</taxon>
        <taxon>Vertebrata</taxon>
        <taxon>Euteleostomi</taxon>
        <taxon>Actinopterygii</taxon>
        <taxon>Neopterygii</taxon>
        <taxon>Teleostei</taxon>
        <taxon>Ostariophysi</taxon>
        <taxon>Cypriniformes</taxon>
        <taxon>Danionidae</taxon>
        <taxon>Danioninae</taxon>
        <taxon>Danio</taxon>
    </lineage>
</organism>
<feature type="chain" id="PRO_0000324570" description="8-oxo-dGDP phosphatase NUDT18">
    <location>
        <begin position="1"/>
        <end position="325"/>
    </location>
</feature>
<feature type="domain" description="Nudix hydrolase" evidence="2">
    <location>
        <begin position="38"/>
        <end position="163"/>
    </location>
</feature>
<feature type="short sequence motif" description="Nudix box">
    <location>
        <begin position="73"/>
        <end position="94"/>
    </location>
</feature>
<feature type="binding site" evidence="1">
    <location>
        <position position="55"/>
    </location>
    <ligand>
        <name>Mg(2+)</name>
        <dbReference type="ChEBI" id="CHEBI:18420"/>
    </ligand>
</feature>
<evidence type="ECO:0000250" key="1">
    <source>
        <dbReference type="UniProtKB" id="Q6ZVK8"/>
    </source>
</evidence>
<evidence type="ECO:0000255" key="2">
    <source>
        <dbReference type="PROSITE-ProRule" id="PRU00794"/>
    </source>
</evidence>
<evidence type="ECO:0000305" key="3"/>
<evidence type="ECO:0000312" key="4">
    <source>
        <dbReference type="EMBL" id="AAH92771.1"/>
    </source>
</evidence>
<reference key="1">
    <citation type="submission" date="2005-04" db="EMBL/GenBank/DDBJ databases">
        <authorList>
            <consortium name="NIH - Zebrafish Gene Collection (ZGC) project"/>
        </authorList>
    </citation>
    <scope>NUCLEOTIDE SEQUENCE [LARGE SCALE MRNA]</scope>
</reference>